<organism>
    <name type="scientific">Mus musculus</name>
    <name type="common">Mouse</name>
    <dbReference type="NCBI Taxonomy" id="10090"/>
    <lineage>
        <taxon>Eukaryota</taxon>
        <taxon>Metazoa</taxon>
        <taxon>Chordata</taxon>
        <taxon>Craniata</taxon>
        <taxon>Vertebrata</taxon>
        <taxon>Euteleostomi</taxon>
        <taxon>Mammalia</taxon>
        <taxon>Eutheria</taxon>
        <taxon>Euarchontoglires</taxon>
        <taxon>Glires</taxon>
        <taxon>Rodentia</taxon>
        <taxon>Myomorpha</taxon>
        <taxon>Muroidea</taxon>
        <taxon>Muridae</taxon>
        <taxon>Murinae</taxon>
        <taxon>Mus</taxon>
        <taxon>Mus</taxon>
    </lineage>
</organism>
<accession>O08608</accession>
<gene>
    <name type="primary">Oaz2</name>
    <name type="synonym">Sez15</name>
</gene>
<name>OAZ2_MOUSE</name>
<protein>
    <recommendedName>
        <fullName>Ornithine decarboxylase antizyme 2</fullName>
        <shortName>AZ2</shortName>
        <shortName>ODC-Az 2</shortName>
    </recommendedName>
    <alternativeName>
        <fullName>Seizure-related protein 15</fullName>
    </alternativeName>
</protein>
<proteinExistence type="evidence at protein level"/>
<evidence type="ECO:0000250" key="1">
    <source>
        <dbReference type="UniProtKB" id="P54368"/>
    </source>
</evidence>
<evidence type="ECO:0000269" key="2">
    <source>
    </source>
</evidence>
<evidence type="ECO:0000269" key="3">
    <source>
    </source>
</evidence>
<evidence type="ECO:0000269" key="4">
    <source>
    </source>
</evidence>
<evidence type="ECO:0000269" key="5">
    <source>
    </source>
</evidence>
<evidence type="ECO:0000269" key="6">
    <source>
    </source>
</evidence>
<evidence type="ECO:0000305" key="7"/>
<reference key="1">
    <citation type="journal article" date="1998" name="Genomics">
        <title>A second mammalian antizyme: conservation of programmed ribosomal frameshifting.</title>
        <authorList>
            <person name="Ivanov I.P."/>
            <person name="Gesteland R.F."/>
            <person name="Atkins J.F."/>
        </authorList>
    </citation>
    <scope>NUCLEOTIDE SEQUENCE [MRNA]</scope>
</reference>
<reference key="2">
    <citation type="journal article" date="1996" name="Biochem. Biophys. Res. Commun.">
        <title>Molecular characterization of seizure-related genes isolated by differential screening.</title>
        <authorList>
            <person name="Kajiwara K."/>
            <person name="Nagawawa H."/>
            <person name="Shimizu-Nishikawa K."/>
            <person name="Ookura T."/>
            <person name="Kimura M."/>
            <person name="Sugaya E."/>
        </authorList>
    </citation>
    <scope>NUCLEOTIDE SEQUENCE [MRNA] OF 50-189</scope>
    <source>
        <strain>C57BL/6J</strain>
        <tissue>Brain cortex</tissue>
    </source>
</reference>
<reference key="3">
    <citation type="journal article" date="2006" name="J. Biol. Chem.">
        <title>Mouse ornithine decarboxylase-like gene encodes an antizyme inhibitor devoid of ornithine and arginine decarboxylating activity.</title>
        <authorList>
            <person name="Lopez-Contreras A.J."/>
            <person name="Lopez-Garcia C."/>
            <person name="Jimenez-Cervantes C."/>
            <person name="Cremades A."/>
            <person name="Penafiel R."/>
        </authorList>
    </citation>
    <scope>FUNCTION</scope>
    <scope>INTERACTION WITH AZIN2</scope>
</reference>
<reference key="4">
    <citation type="journal article" date="2008" name="J. Biol. Chem.">
        <title>Antizyme inhibitor 2 (AZIN2/ODCp) stimulates polyamine uptake in mammalian cells.</title>
        <authorList>
            <person name="Lopez-Contreras A.J."/>
            <person name="Ramos-Molina B."/>
            <person name="Cremades A."/>
            <person name="Penafiel R."/>
        </authorList>
    </citation>
    <scope>FUNCTION</scope>
</reference>
<reference key="5">
    <citation type="journal article" date="2009" name="J. Cell. Biochem.">
        <title>Subcellular localization of antizyme inhibitor 2 in mammalian cells: Influence of intrinsic sequences and interaction with antizymes.</title>
        <authorList>
            <person name="Lopez-Contreras A.J."/>
            <person name="Sanchez-Laorden B.L."/>
            <person name="Ramos-Molina B."/>
            <person name="de la Morena M.E."/>
            <person name="Cremades A."/>
            <person name="Penafiel R."/>
        </authorList>
    </citation>
    <scope>FUNCTION</scope>
</reference>
<reference key="6">
    <citation type="journal article" date="2009" name="J. Cell. Biochem.">
        <title>Subcellular localization and phosphorylation of antizyme 2.</title>
        <authorList>
            <person name="Murai N."/>
            <person name="Shimizu A."/>
            <person name="Murakami Y."/>
            <person name="Matsufuji S."/>
        </authorList>
    </citation>
    <scope>SUBCELLULAR LOCATION</scope>
    <scope>PHOSPHORYLATION AT SER-186</scope>
</reference>
<reference key="7">
    <citation type="journal article" date="2014" name="FEBS Open Bio">
        <title>Structural and degradative aspects of ornithine decarboxylase antizyme inhibitor 2.</title>
        <authorList>
            <person name="Ramos-Molina B."/>
            <person name="Lambertos A."/>
            <person name="Lopez-Contreras A.J."/>
            <person name="Kasprzak J.M."/>
            <person name="Czerwoniec A."/>
            <person name="Bujnicki J.M."/>
            <person name="Cremades A."/>
            <person name="Penafiel R."/>
        </authorList>
    </citation>
    <scope>FUNCTION</scope>
</reference>
<dbReference type="EMBL" id="AF057298">
    <property type="protein sequence ID" value="AAD03266.1"/>
    <property type="molecule type" value="mRNA"/>
</dbReference>
<dbReference type="EMBL" id="D78643">
    <property type="protein sequence ID" value="BAA19569.1"/>
    <property type="molecule type" value="mRNA"/>
</dbReference>
<dbReference type="CCDS" id="CCDS57683.1">
    <molecule id="O08608-1"/>
</dbReference>
<dbReference type="RefSeq" id="NP_035082.1">
    <molecule id="O08608-1"/>
    <property type="nucleotide sequence ID" value="NM_010952.3"/>
</dbReference>
<dbReference type="SMR" id="O08608"/>
<dbReference type="FunCoup" id="O08608">
    <property type="interactions" value="3324"/>
</dbReference>
<dbReference type="IntAct" id="O08608">
    <property type="interactions" value="1"/>
</dbReference>
<dbReference type="STRING" id="10090.ENSMUSP00000136914"/>
<dbReference type="iPTMnet" id="O08608"/>
<dbReference type="PhosphoSitePlus" id="O08608"/>
<dbReference type="PaxDb" id="10090-ENSMUSP00000136914"/>
<dbReference type="ProteomicsDB" id="287879">
    <molecule id="O08608-1"/>
</dbReference>
<dbReference type="Antibodypedia" id="42839">
    <property type="antibodies" value="85 antibodies from 19 providers"/>
</dbReference>
<dbReference type="Ensembl" id="ENSMUST00000153700.9">
    <molecule id="O08608-1"/>
    <property type="protein sequence ID" value="ENSMUSP00000136914.2"/>
    <property type="gene ID" value="ENSMUSG00000040652.18"/>
</dbReference>
<dbReference type="GeneID" id="18247"/>
<dbReference type="KEGG" id="mmu:18247"/>
<dbReference type="UCSC" id="uc009qdu.2">
    <molecule id="O08608-1"/>
    <property type="organism name" value="mouse"/>
</dbReference>
<dbReference type="AGR" id="MGI:109492"/>
<dbReference type="CTD" id="4947"/>
<dbReference type="MGI" id="MGI:109492">
    <property type="gene designation" value="Oaz2"/>
</dbReference>
<dbReference type="VEuPathDB" id="HostDB:ENSMUSG00000040652"/>
<dbReference type="eggNOG" id="KOG4387">
    <property type="taxonomic scope" value="Eukaryota"/>
</dbReference>
<dbReference type="GeneTree" id="ENSGT00940000157725"/>
<dbReference type="InParanoid" id="O08608"/>
<dbReference type="OMA" id="IVHFRYE"/>
<dbReference type="OrthoDB" id="5959761at2759"/>
<dbReference type="PhylomeDB" id="O08608"/>
<dbReference type="TreeFam" id="TF314741"/>
<dbReference type="Reactome" id="R-MMU-350562">
    <property type="pathway name" value="Regulation of ornithine decarboxylase (ODC)"/>
</dbReference>
<dbReference type="BioGRID-ORCS" id="18247">
    <property type="hits" value="0 hits in 60 CRISPR screens"/>
</dbReference>
<dbReference type="ChiTaRS" id="Oaz2">
    <property type="organism name" value="mouse"/>
</dbReference>
<dbReference type="PRO" id="PR:O08608"/>
<dbReference type="Proteomes" id="UP000000589">
    <property type="component" value="Chromosome 9"/>
</dbReference>
<dbReference type="RNAct" id="O08608">
    <property type="molecule type" value="protein"/>
</dbReference>
<dbReference type="Bgee" id="ENSMUSG00000040652">
    <property type="expression patterns" value="Expressed in lung and 63 other cell types or tissues"/>
</dbReference>
<dbReference type="ExpressionAtlas" id="O08608">
    <property type="expression patterns" value="baseline and differential"/>
</dbReference>
<dbReference type="GO" id="GO:0005634">
    <property type="term" value="C:nucleus"/>
    <property type="evidence" value="ECO:0007669"/>
    <property type="project" value="UniProtKB-SubCell"/>
</dbReference>
<dbReference type="GO" id="GO:0008073">
    <property type="term" value="F:ornithine decarboxylase inhibitor activity"/>
    <property type="evidence" value="ECO:0000316"/>
    <property type="project" value="MGI"/>
</dbReference>
<dbReference type="GO" id="GO:1902268">
    <property type="term" value="P:negative regulation of polyamine transmembrane transport"/>
    <property type="evidence" value="ECO:0000314"/>
    <property type="project" value="UniProtKB"/>
</dbReference>
<dbReference type="GO" id="GO:0006596">
    <property type="term" value="P:polyamine biosynthetic process"/>
    <property type="evidence" value="ECO:0007669"/>
    <property type="project" value="UniProtKB-KW"/>
</dbReference>
<dbReference type="GO" id="GO:0006595">
    <property type="term" value="P:polyamine metabolic process"/>
    <property type="evidence" value="ECO:0000304"/>
    <property type="project" value="MGI"/>
</dbReference>
<dbReference type="GO" id="GO:0090316">
    <property type="term" value="P:positive regulation of intracellular protein transport"/>
    <property type="evidence" value="ECO:0000314"/>
    <property type="project" value="UniProtKB"/>
</dbReference>
<dbReference type="GO" id="GO:0045732">
    <property type="term" value="P:positive regulation of protein catabolic process"/>
    <property type="evidence" value="ECO:0000314"/>
    <property type="project" value="UniProtKB"/>
</dbReference>
<dbReference type="GO" id="GO:0075523">
    <property type="term" value="P:viral translational frameshifting"/>
    <property type="evidence" value="ECO:0007669"/>
    <property type="project" value="UniProtKB-KW"/>
</dbReference>
<dbReference type="FunFam" id="3.40.630.60:FF:000001">
    <property type="entry name" value="Ornithine decarboxylase antizyme 1"/>
    <property type="match status" value="1"/>
</dbReference>
<dbReference type="Gene3D" id="3.40.630.60">
    <property type="match status" value="1"/>
</dbReference>
<dbReference type="InterPro" id="IPR016181">
    <property type="entry name" value="Acyl_CoA_acyltransferase"/>
</dbReference>
<dbReference type="InterPro" id="IPR002993">
    <property type="entry name" value="ODC_AZ"/>
</dbReference>
<dbReference type="InterPro" id="IPR038581">
    <property type="entry name" value="ODC_AZ_sf"/>
</dbReference>
<dbReference type="PANTHER" id="PTHR10279">
    <property type="entry name" value="ORNITHINE DECARBOXYLASE ANTIZYME"/>
    <property type="match status" value="1"/>
</dbReference>
<dbReference type="PANTHER" id="PTHR10279:SF6">
    <property type="entry name" value="ORNITHINE DECARBOXYLASE ANTIZYME 2"/>
    <property type="match status" value="1"/>
</dbReference>
<dbReference type="Pfam" id="PF02100">
    <property type="entry name" value="ODC_AZ"/>
    <property type="match status" value="1"/>
</dbReference>
<dbReference type="SUPFAM" id="SSF55729">
    <property type="entry name" value="Acyl-CoA N-acyltransferases (Nat)"/>
    <property type="match status" value="1"/>
</dbReference>
<dbReference type="PROSITE" id="PS01337">
    <property type="entry name" value="ODC_AZ"/>
    <property type="match status" value="1"/>
</dbReference>
<feature type="chain" id="PRO_0000220858" description="Ornithine decarboxylase antizyme 2">
    <location>
        <begin position="1"/>
        <end position="189"/>
    </location>
</feature>
<feature type="modified residue" description="Phosphoserine" evidence="5">
    <location>
        <position position="186"/>
    </location>
</feature>
<comment type="function">
    <text evidence="2 3 4 6">Ornithine decarboxylase (ODC) antizyme protein that negatively regulates ODC activity and intracellular polyamine biosynthesis and uptake in response to increased intracellular polyamine levels. Binds to ODC monomers, inhibiting the assembly of the functional ODC homodimers. Does not target the ODC monomers for degradation, which allows a protein synthesis-independent restoration of ODC activity (PubMed:16916800, PubMed:18508777, PubMed:24967154). Involved in the translocation of AZIN2 from ER-Golgi intermediate compartment (ERGIC) to the cytosol (PubMed:19449338).</text>
</comment>
<comment type="subunit">
    <text evidence="1 2">Interacts with ODC1 and thereby sterically blocks ODC homodimerization (By similarity). Interacts with AZIN2; this interaction disrupts the interaction between the antizyme and ODC1 (PubMed:16916800).</text>
</comment>
<comment type="subcellular location">
    <subcellularLocation>
        <location evidence="5">Nucleus</location>
    </subcellularLocation>
</comment>
<comment type="alternative products">
    <event type="ribosomal frameshifting"/>
    <isoform>
        <id>O08608-1</id>
        <name>1</name>
        <sequence type="displayed"/>
    </isoform>
    <text>A ribosomal frameshift occurs between the codons for Ser-32 and Asp-33. An autoregulatory mechanism enables modulation of frameshifting according to the cellular concentration of polyamines.</text>
</comment>
<comment type="similarity">
    <text evidence="7">Belongs to the ODC antizyme family.</text>
</comment>
<keyword id="KW-0539">Nucleus</keyword>
<keyword id="KW-0597">Phosphoprotein</keyword>
<keyword id="KW-0620">Polyamine biosynthesis</keyword>
<keyword id="KW-1185">Reference proteome</keyword>
<keyword id="KW-0688">Ribosomal frameshifting</keyword>
<sequence length="189" mass="21025">MINTQDSSILPLSKCPQLQCCRHIVPGPLWCSDAPHPLSKIPGGRGGGRDPSLSALIYKDEKLTVTQDLPVNDGKPHIVHFQYEVTEVKVSSWDAVLSSQSLFVEIPDGLLADGSKEGLLALLEFAEEKMKVNYVFICFRKGREDRAPLLKTFSFLGFEIVRPGHPCVPSRPDVMFMVYPLDQNLSDED</sequence>